<evidence type="ECO:0000255" key="1">
    <source>
        <dbReference type="PROSITE-ProRule" id="PRU00981"/>
    </source>
</evidence>
<evidence type="ECO:0000305" key="2"/>
<dbReference type="EMBL" id="AB016875">
    <property type="protein sequence ID" value="BAB11628.1"/>
    <property type="molecule type" value="Genomic_DNA"/>
</dbReference>
<dbReference type="EMBL" id="CP002688">
    <property type="protein sequence ID" value="AED94991.1"/>
    <property type="molecule type" value="Genomic_DNA"/>
</dbReference>
<dbReference type="EMBL" id="AY065390">
    <property type="protein sequence ID" value="AAL38831.1"/>
    <property type="molecule type" value="mRNA"/>
</dbReference>
<dbReference type="EMBL" id="AY096718">
    <property type="protein sequence ID" value="AAM20352.1"/>
    <property type="molecule type" value="mRNA"/>
</dbReference>
<dbReference type="RefSeq" id="NP_199178.1">
    <property type="nucleotide sequence ID" value="NM_123731.5"/>
</dbReference>
<dbReference type="SMR" id="Q9FIX5"/>
<dbReference type="BioGRID" id="19635">
    <property type="interactions" value="6"/>
</dbReference>
<dbReference type="FunCoup" id="Q9FIX5">
    <property type="interactions" value="121"/>
</dbReference>
<dbReference type="IntAct" id="Q9FIX5">
    <property type="interactions" value="6"/>
</dbReference>
<dbReference type="STRING" id="3702.Q9FIX5"/>
<dbReference type="PaxDb" id="3702-AT5G43650.1"/>
<dbReference type="EnsemblPlants" id="AT5G43650.1">
    <property type="protein sequence ID" value="AT5G43650.1"/>
    <property type="gene ID" value="AT5G43650"/>
</dbReference>
<dbReference type="GeneID" id="834385"/>
<dbReference type="Gramene" id="AT5G43650.1">
    <property type="protein sequence ID" value="AT5G43650.1"/>
    <property type="gene ID" value="AT5G43650"/>
</dbReference>
<dbReference type="KEGG" id="ath:AT5G43650"/>
<dbReference type="Araport" id="AT5G43650"/>
<dbReference type="TAIR" id="AT5G43650">
    <property type="gene designation" value="BHLH92"/>
</dbReference>
<dbReference type="eggNOG" id="ENOG502S1P8">
    <property type="taxonomic scope" value="Eukaryota"/>
</dbReference>
<dbReference type="HOGENOM" id="CLU_080571_0_0_1"/>
<dbReference type="InParanoid" id="Q9FIX5"/>
<dbReference type="OMA" id="ATDHDKM"/>
<dbReference type="PhylomeDB" id="Q9FIX5"/>
<dbReference type="PRO" id="PR:Q9FIX5"/>
<dbReference type="Proteomes" id="UP000006548">
    <property type="component" value="Chromosome 5"/>
</dbReference>
<dbReference type="ExpressionAtlas" id="Q9FIX5">
    <property type="expression patterns" value="baseline and differential"/>
</dbReference>
<dbReference type="GO" id="GO:0005634">
    <property type="term" value="C:nucleus"/>
    <property type="evidence" value="ECO:0007669"/>
    <property type="project" value="UniProtKB-SubCell"/>
</dbReference>
<dbReference type="GO" id="GO:0003700">
    <property type="term" value="F:DNA-binding transcription factor activity"/>
    <property type="evidence" value="ECO:0000250"/>
    <property type="project" value="TAIR"/>
</dbReference>
<dbReference type="GO" id="GO:0046983">
    <property type="term" value="F:protein dimerization activity"/>
    <property type="evidence" value="ECO:0007669"/>
    <property type="project" value="InterPro"/>
</dbReference>
<dbReference type="GO" id="GO:0000976">
    <property type="term" value="F:transcription cis-regulatory region binding"/>
    <property type="evidence" value="ECO:0000353"/>
    <property type="project" value="TAIR"/>
</dbReference>
<dbReference type="GO" id="GO:0006355">
    <property type="term" value="P:regulation of DNA-templated transcription"/>
    <property type="evidence" value="ECO:0000304"/>
    <property type="project" value="TAIR"/>
</dbReference>
<dbReference type="CDD" id="cd11393">
    <property type="entry name" value="bHLH_AtbHLH_like"/>
    <property type="match status" value="1"/>
</dbReference>
<dbReference type="Gene3D" id="4.10.280.10">
    <property type="entry name" value="Helix-loop-helix DNA-binding domain"/>
    <property type="match status" value="1"/>
</dbReference>
<dbReference type="InterPro" id="IPR044658">
    <property type="entry name" value="bHLH92/bHLH041-like"/>
</dbReference>
<dbReference type="InterPro" id="IPR045239">
    <property type="entry name" value="bHLH95_bHLH"/>
</dbReference>
<dbReference type="InterPro" id="IPR011598">
    <property type="entry name" value="bHLH_dom"/>
</dbReference>
<dbReference type="InterPro" id="IPR036638">
    <property type="entry name" value="HLH_DNA-bd_sf"/>
</dbReference>
<dbReference type="PANTHER" id="PTHR46665">
    <property type="entry name" value="TRANSCRIPTION FACTOR BHLH041-RELATED-RELATED"/>
    <property type="match status" value="1"/>
</dbReference>
<dbReference type="PANTHER" id="PTHR46665:SF6">
    <property type="entry name" value="TRANSCRIPTION FACTOR BHLH92"/>
    <property type="match status" value="1"/>
</dbReference>
<dbReference type="Pfam" id="PF00010">
    <property type="entry name" value="HLH"/>
    <property type="match status" value="1"/>
</dbReference>
<dbReference type="SMART" id="SM00353">
    <property type="entry name" value="HLH"/>
    <property type="match status" value="1"/>
</dbReference>
<dbReference type="SUPFAM" id="SSF47459">
    <property type="entry name" value="HLH, helix-loop-helix DNA-binding domain"/>
    <property type="match status" value="1"/>
</dbReference>
<dbReference type="PROSITE" id="PS50888">
    <property type="entry name" value="BHLH"/>
    <property type="match status" value="1"/>
</dbReference>
<accession>Q9FIX5</accession>
<proteinExistence type="evidence at protein level"/>
<reference key="1">
    <citation type="journal article" date="1998" name="DNA Res.">
        <title>Structural analysis of Arabidopsis thaliana chromosome 5. VIII. Sequence features of the regions of 1,081,958 bp covered by seventeen physically assigned P1 and TAC clones.</title>
        <authorList>
            <person name="Asamizu E."/>
            <person name="Sato S."/>
            <person name="Kaneko T."/>
            <person name="Nakamura Y."/>
            <person name="Kotani H."/>
            <person name="Miyajima N."/>
            <person name="Tabata S."/>
        </authorList>
    </citation>
    <scope>NUCLEOTIDE SEQUENCE [LARGE SCALE GENOMIC DNA]</scope>
    <source>
        <strain>cv. Columbia</strain>
    </source>
</reference>
<reference key="2">
    <citation type="journal article" date="2017" name="Plant J.">
        <title>Araport11: a complete reannotation of the Arabidopsis thaliana reference genome.</title>
        <authorList>
            <person name="Cheng C.Y."/>
            <person name="Krishnakumar V."/>
            <person name="Chan A.P."/>
            <person name="Thibaud-Nissen F."/>
            <person name="Schobel S."/>
            <person name="Town C.D."/>
        </authorList>
    </citation>
    <scope>GENOME REANNOTATION</scope>
    <source>
        <strain>cv. Columbia</strain>
    </source>
</reference>
<reference key="3">
    <citation type="journal article" date="2003" name="Science">
        <title>Empirical analysis of transcriptional activity in the Arabidopsis genome.</title>
        <authorList>
            <person name="Yamada K."/>
            <person name="Lim J."/>
            <person name="Dale J.M."/>
            <person name="Chen H."/>
            <person name="Shinn P."/>
            <person name="Palm C.J."/>
            <person name="Southwick A.M."/>
            <person name="Wu H.C."/>
            <person name="Kim C.J."/>
            <person name="Nguyen M."/>
            <person name="Pham P.K."/>
            <person name="Cheuk R.F."/>
            <person name="Karlin-Newmann G."/>
            <person name="Liu S.X."/>
            <person name="Lam B."/>
            <person name="Sakano H."/>
            <person name="Wu T."/>
            <person name="Yu G."/>
            <person name="Miranda M."/>
            <person name="Quach H.L."/>
            <person name="Tripp M."/>
            <person name="Chang C.H."/>
            <person name="Lee J.M."/>
            <person name="Toriumi M.J."/>
            <person name="Chan M.M."/>
            <person name="Tang C.C."/>
            <person name="Onodera C.S."/>
            <person name="Deng J.M."/>
            <person name="Akiyama K."/>
            <person name="Ansari Y."/>
            <person name="Arakawa T."/>
            <person name="Banh J."/>
            <person name="Banno F."/>
            <person name="Bowser L."/>
            <person name="Brooks S.Y."/>
            <person name="Carninci P."/>
            <person name="Chao Q."/>
            <person name="Choy N."/>
            <person name="Enju A."/>
            <person name="Goldsmith A.D."/>
            <person name="Gurjal M."/>
            <person name="Hansen N.F."/>
            <person name="Hayashizaki Y."/>
            <person name="Johnson-Hopson C."/>
            <person name="Hsuan V.W."/>
            <person name="Iida K."/>
            <person name="Karnes M."/>
            <person name="Khan S."/>
            <person name="Koesema E."/>
            <person name="Ishida J."/>
            <person name="Jiang P.X."/>
            <person name="Jones T."/>
            <person name="Kawai J."/>
            <person name="Kamiya A."/>
            <person name="Meyers C."/>
            <person name="Nakajima M."/>
            <person name="Narusaka M."/>
            <person name="Seki M."/>
            <person name="Sakurai T."/>
            <person name="Satou M."/>
            <person name="Tamse R."/>
            <person name="Vaysberg M."/>
            <person name="Wallender E.K."/>
            <person name="Wong C."/>
            <person name="Yamamura Y."/>
            <person name="Yuan S."/>
            <person name="Shinozaki K."/>
            <person name="Davis R.W."/>
            <person name="Theologis A."/>
            <person name="Ecker J.R."/>
        </authorList>
    </citation>
    <scope>NUCLEOTIDE SEQUENCE [LARGE SCALE MRNA]</scope>
    <source>
        <strain>cv. Columbia</strain>
    </source>
</reference>
<reference key="4">
    <citation type="journal article" date="2003" name="Mol. Biol. Evol.">
        <title>The basic helix-loop-helix transcription factor family in plants: a genome-wide study of protein structure and functional diversity.</title>
        <authorList>
            <person name="Heim M.A."/>
            <person name="Jakoby M."/>
            <person name="Werber M."/>
            <person name="Martin C."/>
            <person name="Weisshaar B."/>
            <person name="Bailey P.C."/>
        </authorList>
    </citation>
    <scope>GENE FAMILY</scope>
    <scope>NOMENCLATURE</scope>
</reference>
<reference key="5">
    <citation type="journal article" date="2003" name="Plant Cell">
        <title>The Arabidopsis basic/helix-loop-helix transcription factor family.</title>
        <authorList>
            <person name="Toledo-Ortiz G."/>
            <person name="Huq E."/>
            <person name="Quail P.H."/>
        </authorList>
    </citation>
    <scope>GENE FAMILY</scope>
</reference>
<reference key="6">
    <citation type="journal article" date="2003" name="Plant Cell">
        <title>Update on the basic helix-loop-helix transcription factor gene family in Arabidopsis thaliana.</title>
        <authorList>
            <person name="Bailey P.C."/>
            <person name="Martin C."/>
            <person name="Toledo-Ortiz G."/>
            <person name="Quail P.H."/>
            <person name="Huq E."/>
            <person name="Heim M.A."/>
            <person name="Jakoby M."/>
            <person name="Werber M."/>
            <person name="Weisshaar B."/>
        </authorList>
    </citation>
    <scope>GENE FAMILY</scope>
    <scope>NOMENCLATURE</scope>
</reference>
<feature type="chain" id="PRO_0000358783" description="Transcription factor bHLH92">
    <location>
        <begin position="1"/>
        <end position="247"/>
    </location>
</feature>
<feature type="domain" description="bHLH" evidence="1">
    <location>
        <begin position="85"/>
        <end position="134"/>
    </location>
</feature>
<gene>
    <name type="primary">BHLH92</name>
    <name type="synonym">EN22</name>
    <name type="ordered locus">At5g43650</name>
    <name type="ORF">K9D7.15</name>
</gene>
<name>BH092_ARATH</name>
<sequence>MDNFFLGLSCQEENNFWDLIVADISGDRSVSVPIRSAFRSYMKDTELRMMSPKISSSKVNVKKRMVNLLRKNWEEKKNTVAPEKERSRRHMLKERTRREKQKQSYLALHSLLPFATKNDKNSIVEKAVDEIAKLQRLKKELVRRIKVIEEKSAKDGHDEMSETKVRVNLKEPLSGLDSMLEALHYLKSMGTKLKTVHANFSPQEFSATMTIETQIRGEEVEKRVERRLQETEWKLLFLPEASFYKDY</sequence>
<comment type="subunit">
    <text evidence="2">Homodimer.</text>
</comment>
<comment type="interaction">
    <interactant intactId="EBI-15199233">
        <id>Q9FIX5</id>
    </interactant>
    <interactant intactId="EBI-395803">
        <id>Q9XGN1</id>
        <label>TTG1</label>
    </interactant>
    <organismsDiffer>false</organismsDiffer>
    <experiments>8</experiments>
</comment>
<comment type="subcellular location">
    <subcellularLocation>
        <location evidence="1">Nucleus</location>
    </subcellularLocation>
</comment>
<keyword id="KW-0238">DNA-binding</keyword>
<keyword id="KW-0539">Nucleus</keyword>
<keyword id="KW-1185">Reference proteome</keyword>
<keyword id="KW-0804">Transcription</keyword>
<keyword id="KW-0805">Transcription regulation</keyword>
<protein>
    <recommendedName>
        <fullName>Transcription factor bHLH92</fullName>
    </recommendedName>
    <alternativeName>
        <fullName>Basic helix-loop-helix protein 92</fullName>
        <shortName>AtbHLH92</shortName>
        <shortName>bHLH 92</shortName>
    </alternativeName>
    <alternativeName>
        <fullName>Transcription factor EN 22</fullName>
    </alternativeName>
    <alternativeName>
        <fullName>bHLH transcription factor bHLH092</fullName>
    </alternativeName>
</protein>
<organism>
    <name type="scientific">Arabidopsis thaliana</name>
    <name type="common">Mouse-ear cress</name>
    <dbReference type="NCBI Taxonomy" id="3702"/>
    <lineage>
        <taxon>Eukaryota</taxon>
        <taxon>Viridiplantae</taxon>
        <taxon>Streptophyta</taxon>
        <taxon>Embryophyta</taxon>
        <taxon>Tracheophyta</taxon>
        <taxon>Spermatophyta</taxon>
        <taxon>Magnoliopsida</taxon>
        <taxon>eudicotyledons</taxon>
        <taxon>Gunneridae</taxon>
        <taxon>Pentapetalae</taxon>
        <taxon>rosids</taxon>
        <taxon>malvids</taxon>
        <taxon>Brassicales</taxon>
        <taxon>Brassicaceae</taxon>
        <taxon>Camelineae</taxon>
        <taxon>Arabidopsis</taxon>
    </lineage>
</organism>